<proteinExistence type="inferred from homology"/>
<evidence type="ECO:0000255" key="1">
    <source>
        <dbReference type="HAMAP-Rule" id="MF_00076"/>
    </source>
</evidence>
<keyword id="KW-0028">Amino-acid biosynthesis</keyword>
<keyword id="KW-0963">Cytoplasm</keyword>
<keyword id="KW-0368">Histidine biosynthesis</keyword>
<keyword id="KW-0456">Lyase</keyword>
<feature type="chain" id="PRO_0000158107" description="Imidazoleglycerol-phosphate dehydratase">
    <location>
        <begin position="1"/>
        <end position="194"/>
    </location>
</feature>
<accession>Q6HLE6</accession>
<reference key="1">
    <citation type="journal article" date="2006" name="J. Bacteriol.">
        <title>Pathogenomic sequence analysis of Bacillus cereus and Bacillus thuringiensis isolates closely related to Bacillus anthracis.</title>
        <authorList>
            <person name="Han C.S."/>
            <person name="Xie G."/>
            <person name="Challacombe J.F."/>
            <person name="Altherr M.R."/>
            <person name="Bhotika S.S."/>
            <person name="Bruce D."/>
            <person name="Campbell C.S."/>
            <person name="Campbell M.L."/>
            <person name="Chen J."/>
            <person name="Chertkov O."/>
            <person name="Cleland C."/>
            <person name="Dimitrijevic M."/>
            <person name="Doggett N.A."/>
            <person name="Fawcett J.J."/>
            <person name="Glavina T."/>
            <person name="Goodwin L.A."/>
            <person name="Hill K.K."/>
            <person name="Hitchcock P."/>
            <person name="Jackson P.J."/>
            <person name="Keim P."/>
            <person name="Kewalramani A.R."/>
            <person name="Longmire J."/>
            <person name="Lucas S."/>
            <person name="Malfatti S."/>
            <person name="McMurry K."/>
            <person name="Meincke L.J."/>
            <person name="Misra M."/>
            <person name="Moseman B.L."/>
            <person name="Mundt M."/>
            <person name="Munk A.C."/>
            <person name="Okinaka R.T."/>
            <person name="Parson-Quintana B."/>
            <person name="Reilly L.P."/>
            <person name="Richardson P."/>
            <person name="Robinson D.L."/>
            <person name="Rubin E."/>
            <person name="Saunders E."/>
            <person name="Tapia R."/>
            <person name="Tesmer J.G."/>
            <person name="Thayer N."/>
            <person name="Thompson L.S."/>
            <person name="Tice H."/>
            <person name="Ticknor L.O."/>
            <person name="Wills P.L."/>
            <person name="Brettin T.S."/>
            <person name="Gilna P."/>
        </authorList>
    </citation>
    <scope>NUCLEOTIDE SEQUENCE [LARGE SCALE GENOMIC DNA]</scope>
    <source>
        <strain>97-27</strain>
    </source>
</reference>
<protein>
    <recommendedName>
        <fullName evidence="1">Imidazoleglycerol-phosphate dehydratase</fullName>
        <shortName evidence="1">IGPD</shortName>
        <ecNumber evidence="1">4.2.1.19</ecNumber>
    </recommendedName>
</protein>
<gene>
    <name evidence="1" type="primary">hisB</name>
    <name type="ordered locus">BT9727_1291</name>
</gene>
<name>HIS7_BACHK</name>
<sequence length="194" mass="21509">MRESSQIRETTETKIKLSLQLDEGKNVSVQTGVGFFDHMLTLFARHGRFGLQVEAEGDVFVDAHHTVEDVGIVLGNCLKEALQNKEGINRYGSAYVPMDESLGFVAIDISGRSYIVFQGELTNPKLGDFDTELTEEFFRAVAHAANITLHARILYGSNTHHKIEALFKAFGRALREAVERNAHITGVNSTKGML</sequence>
<comment type="catalytic activity">
    <reaction evidence="1">
        <text>D-erythro-1-(imidazol-4-yl)glycerol 3-phosphate = 3-(imidazol-4-yl)-2-oxopropyl phosphate + H2O</text>
        <dbReference type="Rhea" id="RHEA:11040"/>
        <dbReference type="ChEBI" id="CHEBI:15377"/>
        <dbReference type="ChEBI" id="CHEBI:57766"/>
        <dbReference type="ChEBI" id="CHEBI:58278"/>
        <dbReference type="EC" id="4.2.1.19"/>
    </reaction>
</comment>
<comment type="pathway">
    <text evidence="1">Amino-acid biosynthesis; L-histidine biosynthesis; L-histidine from 5-phospho-alpha-D-ribose 1-diphosphate: step 6/9.</text>
</comment>
<comment type="subcellular location">
    <subcellularLocation>
        <location evidence="1">Cytoplasm</location>
    </subcellularLocation>
</comment>
<comment type="similarity">
    <text evidence="1">Belongs to the imidazoleglycerol-phosphate dehydratase family.</text>
</comment>
<dbReference type="EC" id="4.2.1.19" evidence="1"/>
<dbReference type="EMBL" id="AE017355">
    <property type="protein sequence ID" value="AAT59419.1"/>
    <property type="molecule type" value="Genomic_DNA"/>
</dbReference>
<dbReference type="RefSeq" id="WP_001209295.1">
    <property type="nucleotide sequence ID" value="NC_005957.1"/>
</dbReference>
<dbReference type="RefSeq" id="YP_035625.1">
    <property type="nucleotide sequence ID" value="NC_005957.1"/>
</dbReference>
<dbReference type="SMR" id="Q6HLE6"/>
<dbReference type="GeneID" id="45021406"/>
<dbReference type="KEGG" id="btk:BT9727_1291"/>
<dbReference type="PATRIC" id="fig|281309.8.peg.1360"/>
<dbReference type="HOGENOM" id="CLU_044308_3_0_9"/>
<dbReference type="UniPathway" id="UPA00031">
    <property type="reaction ID" value="UER00011"/>
</dbReference>
<dbReference type="Proteomes" id="UP000001301">
    <property type="component" value="Chromosome"/>
</dbReference>
<dbReference type="GO" id="GO:0005737">
    <property type="term" value="C:cytoplasm"/>
    <property type="evidence" value="ECO:0007669"/>
    <property type="project" value="UniProtKB-SubCell"/>
</dbReference>
<dbReference type="GO" id="GO:0004424">
    <property type="term" value="F:imidazoleglycerol-phosphate dehydratase activity"/>
    <property type="evidence" value="ECO:0007669"/>
    <property type="project" value="UniProtKB-UniRule"/>
</dbReference>
<dbReference type="GO" id="GO:0000105">
    <property type="term" value="P:L-histidine biosynthetic process"/>
    <property type="evidence" value="ECO:0007669"/>
    <property type="project" value="UniProtKB-UniRule"/>
</dbReference>
<dbReference type="CDD" id="cd07914">
    <property type="entry name" value="IGPD"/>
    <property type="match status" value="1"/>
</dbReference>
<dbReference type="FunFam" id="3.30.230.40:FF:000001">
    <property type="entry name" value="Imidazoleglycerol-phosphate dehydratase HisB"/>
    <property type="match status" value="1"/>
</dbReference>
<dbReference type="FunFam" id="3.30.230.40:FF:000003">
    <property type="entry name" value="Imidazoleglycerol-phosphate dehydratase HisB"/>
    <property type="match status" value="1"/>
</dbReference>
<dbReference type="Gene3D" id="3.30.230.40">
    <property type="entry name" value="Imidazole glycerol phosphate dehydratase, domain 1"/>
    <property type="match status" value="2"/>
</dbReference>
<dbReference type="HAMAP" id="MF_00076">
    <property type="entry name" value="HisB"/>
    <property type="match status" value="1"/>
</dbReference>
<dbReference type="InterPro" id="IPR038494">
    <property type="entry name" value="IGPD_sf"/>
</dbReference>
<dbReference type="InterPro" id="IPR000807">
    <property type="entry name" value="ImidazoleglycerolP_deHydtase"/>
</dbReference>
<dbReference type="InterPro" id="IPR020565">
    <property type="entry name" value="ImidazoleglycerP_deHydtase_CS"/>
</dbReference>
<dbReference type="InterPro" id="IPR020568">
    <property type="entry name" value="Ribosomal_Su5_D2-typ_SF"/>
</dbReference>
<dbReference type="NCBIfam" id="NF002107">
    <property type="entry name" value="PRK00951.1-2"/>
    <property type="match status" value="1"/>
</dbReference>
<dbReference type="NCBIfam" id="NF002111">
    <property type="entry name" value="PRK00951.2-1"/>
    <property type="match status" value="1"/>
</dbReference>
<dbReference type="NCBIfam" id="NF002114">
    <property type="entry name" value="PRK00951.2-4"/>
    <property type="match status" value="1"/>
</dbReference>
<dbReference type="PANTHER" id="PTHR23133:SF2">
    <property type="entry name" value="IMIDAZOLEGLYCEROL-PHOSPHATE DEHYDRATASE"/>
    <property type="match status" value="1"/>
</dbReference>
<dbReference type="PANTHER" id="PTHR23133">
    <property type="entry name" value="IMIDAZOLEGLYCEROL-PHOSPHATE DEHYDRATASE HIS7"/>
    <property type="match status" value="1"/>
</dbReference>
<dbReference type="Pfam" id="PF00475">
    <property type="entry name" value="IGPD"/>
    <property type="match status" value="1"/>
</dbReference>
<dbReference type="SUPFAM" id="SSF54211">
    <property type="entry name" value="Ribosomal protein S5 domain 2-like"/>
    <property type="match status" value="2"/>
</dbReference>
<dbReference type="PROSITE" id="PS00954">
    <property type="entry name" value="IGP_DEHYDRATASE_1"/>
    <property type="match status" value="1"/>
</dbReference>
<dbReference type="PROSITE" id="PS00955">
    <property type="entry name" value="IGP_DEHYDRATASE_2"/>
    <property type="match status" value="1"/>
</dbReference>
<organism>
    <name type="scientific">Bacillus thuringiensis subsp. konkukian (strain 97-27)</name>
    <dbReference type="NCBI Taxonomy" id="281309"/>
    <lineage>
        <taxon>Bacteria</taxon>
        <taxon>Bacillati</taxon>
        <taxon>Bacillota</taxon>
        <taxon>Bacilli</taxon>
        <taxon>Bacillales</taxon>
        <taxon>Bacillaceae</taxon>
        <taxon>Bacillus</taxon>
        <taxon>Bacillus cereus group</taxon>
    </lineage>
</organism>